<comment type="function">
    <text evidence="1">Participates actively in the response to hyperosmotic and heat shock by preventing the aggregation of stress-denatured proteins and by disaggregating proteins, also in an autonomous, DnaK-independent fashion. Unfolded proteins bind initially to DnaJ; upon interaction with the DnaJ-bound protein, DnaK hydrolyzes its bound ATP, resulting in the formation of a stable complex. GrpE releases ADP from DnaK; ATP binding to DnaK triggers the release of the substrate protein, thus completing the reaction cycle. Several rounds of ATP-dependent interactions between DnaJ, DnaK and GrpE are required for fully efficient folding. Also involved, together with DnaK and GrpE, in the DNA replication of plasmids through activation of initiation proteins.</text>
</comment>
<comment type="cofactor">
    <cofactor evidence="1">
        <name>Zn(2+)</name>
        <dbReference type="ChEBI" id="CHEBI:29105"/>
    </cofactor>
    <text evidence="1">Binds 2 Zn(2+) ions per monomer.</text>
</comment>
<comment type="subunit">
    <text evidence="1">Homodimer.</text>
</comment>
<comment type="subcellular location">
    <subcellularLocation>
        <location evidence="1">Cytoplasm</location>
    </subcellularLocation>
</comment>
<comment type="domain">
    <text evidence="1">The J domain is necessary and sufficient to stimulate DnaK ATPase activity. Zinc center 1 plays an important role in the autonomous, DnaK-independent chaperone activity of DnaJ. Zinc center 2 is essential for interaction with DnaK and for DnaJ activity.</text>
</comment>
<comment type="similarity">
    <text evidence="1">Belongs to the DnaJ family.</text>
</comment>
<organism>
    <name type="scientific">Lactococcus lactis subsp. cremoris (strain MG1363)</name>
    <dbReference type="NCBI Taxonomy" id="416870"/>
    <lineage>
        <taxon>Bacteria</taxon>
        <taxon>Bacillati</taxon>
        <taxon>Bacillota</taxon>
        <taxon>Bacilli</taxon>
        <taxon>Lactobacillales</taxon>
        <taxon>Streptococcaceae</taxon>
        <taxon>Lactococcus</taxon>
        <taxon>Lactococcus cremoris subsp. cremoris</taxon>
    </lineage>
</organism>
<sequence length="379" mass="40686">MNNTEYYERLGVDKNASQDEIKKAYRKMSKKYHPDLNKEEGAEDKYKEVQEAYETLSDEQKRAAYDQYGEAGANGGFGGGGFGGASGFSGFGGASGGFGGFEDIFSSFFGGGGAQVNPNAPRQGDDLQYRINLKFEEAIFGVEKQVKYNREELCHTCGGSGAKAGTHPETCHKCGGRGQINVVRDTPLGRMQTQTTCDVCHGTGKEIKEKCTTCHGSGHEKVAHTVKVTVPAGVETGQKMRLQGQGDAGVNGGPYGDLYVVFQVEASDKFERDGAEIYYKMPMDFVQAALGDEVEVPTVHGNVKLKIPAGTQTGANFRLKGKGAPKLRGSGNGDQYVIINIVTPKNMNQAQKEALQAFAKASGIEVSGSGKKGFFDKFK</sequence>
<accession>A2RP20</accession>
<reference key="1">
    <citation type="journal article" date="2007" name="J. Bacteriol.">
        <title>The complete genome sequence of the lactic acid bacterial paradigm Lactococcus lactis subsp. cremoris MG1363.</title>
        <authorList>
            <person name="Wegmann U."/>
            <person name="O'Connell-Motherway M."/>
            <person name="Zomer A."/>
            <person name="Buist G."/>
            <person name="Shearman C."/>
            <person name="Canchaya C."/>
            <person name="Ventura M."/>
            <person name="Goesmann A."/>
            <person name="Gasson M.J."/>
            <person name="Kuipers O.P."/>
            <person name="van Sinderen D."/>
            <person name="Kok J."/>
        </authorList>
    </citation>
    <scope>NUCLEOTIDE SEQUENCE [LARGE SCALE GENOMIC DNA]</scope>
    <source>
        <strain>MG1363</strain>
    </source>
</reference>
<protein>
    <recommendedName>
        <fullName evidence="1">Chaperone protein DnaJ</fullName>
    </recommendedName>
</protein>
<keyword id="KW-0143">Chaperone</keyword>
<keyword id="KW-0963">Cytoplasm</keyword>
<keyword id="KW-0235">DNA replication</keyword>
<keyword id="KW-0479">Metal-binding</keyword>
<keyword id="KW-0677">Repeat</keyword>
<keyword id="KW-0346">Stress response</keyword>
<keyword id="KW-0862">Zinc</keyword>
<keyword id="KW-0863">Zinc-finger</keyword>
<feature type="chain" id="PRO_1000085215" description="Chaperone protein DnaJ">
    <location>
        <begin position="1"/>
        <end position="379"/>
    </location>
</feature>
<feature type="domain" description="J" evidence="1">
    <location>
        <begin position="5"/>
        <end position="69"/>
    </location>
</feature>
<feature type="repeat" description="CXXCXGXG motif">
    <location>
        <begin position="154"/>
        <end position="161"/>
    </location>
</feature>
<feature type="repeat" description="CXXCXGXG motif">
    <location>
        <begin position="171"/>
        <end position="178"/>
    </location>
</feature>
<feature type="repeat" description="CXXCXGXG motif">
    <location>
        <begin position="197"/>
        <end position="204"/>
    </location>
</feature>
<feature type="repeat" description="CXXCXGXG motif">
    <location>
        <begin position="211"/>
        <end position="218"/>
    </location>
</feature>
<feature type="zinc finger region" description="CR-type" evidence="1">
    <location>
        <begin position="141"/>
        <end position="223"/>
    </location>
</feature>
<feature type="binding site" evidence="1">
    <location>
        <position position="154"/>
    </location>
    <ligand>
        <name>Zn(2+)</name>
        <dbReference type="ChEBI" id="CHEBI:29105"/>
        <label>1</label>
    </ligand>
</feature>
<feature type="binding site" evidence="1">
    <location>
        <position position="157"/>
    </location>
    <ligand>
        <name>Zn(2+)</name>
        <dbReference type="ChEBI" id="CHEBI:29105"/>
        <label>1</label>
    </ligand>
</feature>
<feature type="binding site" evidence="1">
    <location>
        <position position="171"/>
    </location>
    <ligand>
        <name>Zn(2+)</name>
        <dbReference type="ChEBI" id="CHEBI:29105"/>
        <label>2</label>
    </ligand>
</feature>
<feature type="binding site" evidence="1">
    <location>
        <position position="174"/>
    </location>
    <ligand>
        <name>Zn(2+)</name>
        <dbReference type="ChEBI" id="CHEBI:29105"/>
        <label>2</label>
    </ligand>
</feature>
<feature type="binding site" evidence="1">
    <location>
        <position position="197"/>
    </location>
    <ligand>
        <name>Zn(2+)</name>
        <dbReference type="ChEBI" id="CHEBI:29105"/>
        <label>2</label>
    </ligand>
</feature>
<feature type="binding site" evidence="1">
    <location>
        <position position="200"/>
    </location>
    <ligand>
        <name>Zn(2+)</name>
        <dbReference type="ChEBI" id="CHEBI:29105"/>
        <label>2</label>
    </ligand>
</feature>
<feature type="binding site" evidence="1">
    <location>
        <position position="211"/>
    </location>
    <ligand>
        <name>Zn(2+)</name>
        <dbReference type="ChEBI" id="CHEBI:29105"/>
        <label>1</label>
    </ligand>
</feature>
<feature type="binding site" evidence="1">
    <location>
        <position position="214"/>
    </location>
    <ligand>
        <name>Zn(2+)</name>
        <dbReference type="ChEBI" id="CHEBI:29105"/>
        <label>1</label>
    </ligand>
</feature>
<dbReference type="EMBL" id="AM406671">
    <property type="protein sequence ID" value="CAL99065.1"/>
    <property type="molecule type" value="Genomic_DNA"/>
</dbReference>
<dbReference type="RefSeq" id="WP_011836127.1">
    <property type="nucleotide sequence ID" value="NC_009004.1"/>
</dbReference>
<dbReference type="SMR" id="A2RP20"/>
<dbReference type="STRING" id="416870.llmg_2502"/>
<dbReference type="GeneID" id="61110547"/>
<dbReference type="KEGG" id="llm:llmg_2502"/>
<dbReference type="eggNOG" id="COG0484">
    <property type="taxonomic scope" value="Bacteria"/>
</dbReference>
<dbReference type="HOGENOM" id="CLU_017633_0_0_9"/>
<dbReference type="OrthoDB" id="9779889at2"/>
<dbReference type="PhylomeDB" id="A2RP20"/>
<dbReference type="Proteomes" id="UP000000364">
    <property type="component" value="Chromosome"/>
</dbReference>
<dbReference type="GO" id="GO:0005737">
    <property type="term" value="C:cytoplasm"/>
    <property type="evidence" value="ECO:0007669"/>
    <property type="project" value="UniProtKB-SubCell"/>
</dbReference>
<dbReference type="GO" id="GO:0005524">
    <property type="term" value="F:ATP binding"/>
    <property type="evidence" value="ECO:0007669"/>
    <property type="project" value="InterPro"/>
</dbReference>
<dbReference type="GO" id="GO:0031072">
    <property type="term" value="F:heat shock protein binding"/>
    <property type="evidence" value="ECO:0007669"/>
    <property type="project" value="InterPro"/>
</dbReference>
<dbReference type="GO" id="GO:0051082">
    <property type="term" value="F:unfolded protein binding"/>
    <property type="evidence" value="ECO:0007669"/>
    <property type="project" value="UniProtKB-UniRule"/>
</dbReference>
<dbReference type="GO" id="GO:0008270">
    <property type="term" value="F:zinc ion binding"/>
    <property type="evidence" value="ECO:0007669"/>
    <property type="project" value="UniProtKB-UniRule"/>
</dbReference>
<dbReference type="GO" id="GO:0051085">
    <property type="term" value="P:chaperone cofactor-dependent protein refolding"/>
    <property type="evidence" value="ECO:0007669"/>
    <property type="project" value="TreeGrafter"/>
</dbReference>
<dbReference type="GO" id="GO:0006260">
    <property type="term" value="P:DNA replication"/>
    <property type="evidence" value="ECO:0007669"/>
    <property type="project" value="UniProtKB-KW"/>
</dbReference>
<dbReference type="GO" id="GO:0042026">
    <property type="term" value="P:protein refolding"/>
    <property type="evidence" value="ECO:0007669"/>
    <property type="project" value="TreeGrafter"/>
</dbReference>
<dbReference type="GO" id="GO:0009408">
    <property type="term" value="P:response to heat"/>
    <property type="evidence" value="ECO:0007669"/>
    <property type="project" value="InterPro"/>
</dbReference>
<dbReference type="CDD" id="cd06257">
    <property type="entry name" value="DnaJ"/>
    <property type="match status" value="1"/>
</dbReference>
<dbReference type="CDD" id="cd10747">
    <property type="entry name" value="DnaJ_C"/>
    <property type="match status" value="1"/>
</dbReference>
<dbReference type="FunFam" id="1.10.287.110:FF:000031">
    <property type="entry name" value="Molecular chaperone DnaJ"/>
    <property type="match status" value="1"/>
</dbReference>
<dbReference type="FunFam" id="2.10.230.10:FF:000002">
    <property type="entry name" value="Molecular chaperone DnaJ"/>
    <property type="match status" value="1"/>
</dbReference>
<dbReference type="FunFam" id="2.60.260.20:FF:000004">
    <property type="entry name" value="Molecular chaperone DnaJ"/>
    <property type="match status" value="1"/>
</dbReference>
<dbReference type="Gene3D" id="1.10.287.110">
    <property type="entry name" value="DnaJ domain"/>
    <property type="match status" value="1"/>
</dbReference>
<dbReference type="Gene3D" id="2.10.230.10">
    <property type="entry name" value="Heat shock protein DnaJ, cysteine-rich domain"/>
    <property type="match status" value="1"/>
</dbReference>
<dbReference type="Gene3D" id="2.60.260.20">
    <property type="entry name" value="Urease metallochaperone UreE, N-terminal domain"/>
    <property type="match status" value="2"/>
</dbReference>
<dbReference type="HAMAP" id="MF_01152">
    <property type="entry name" value="DnaJ"/>
    <property type="match status" value="1"/>
</dbReference>
<dbReference type="InterPro" id="IPR012724">
    <property type="entry name" value="DnaJ"/>
</dbReference>
<dbReference type="InterPro" id="IPR002939">
    <property type="entry name" value="DnaJ_C"/>
</dbReference>
<dbReference type="InterPro" id="IPR001623">
    <property type="entry name" value="DnaJ_domain"/>
</dbReference>
<dbReference type="InterPro" id="IPR018253">
    <property type="entry name" value="DnaJ_domain_CS"/>
</dbReference>
<dbReference type="InterPro" id="IPR008971">
    <property type="entry name" value="HSP40/DnaJ_pept-bd"/>
</dbReference>
<dbReference type="InterPro" id="IPR001305">
    <property type="entry name" value="HSP_DnaJ_Cys-rich_dom"/>
</dbReference>
<dbReference type="InterPro" id="IPR036410">
    <property type="entry name" value="HSP_DnaJ_Cys-rich_dom_sf"/>
</dbReference>
<dbReference type="InterPro" id="IPR036869">
    <property type="entry name" value="J_dom_sf"/>
</dbReference>
<dbReference type="NCBIfam" id="TIGR02349">
    <property type="entry name" value="DnaJ_bact"/>
    <property type="match status" value="1"/>
</dbReference>
<dbReference type="NCBIfam" id="NF008035">
    <property type="entry name" value="PRK10767.1"/>
    <property type="match status" value="1"/>
</dbReference>
<dbReference type="NCBIfam" id="NF010869">
    <property type="entry name" value="PRK14276.1"/>
    <property type="match status" value="1"/>
</dbReference>
<dbReference type="PANTHER" id="PTHR43096:SF48">
    <property type="entry name" value="CHAPERONE PROTEIN DNAJ"/>
    <property type="match status" value="1"/>
</dbReference>
<dbReference type="PANTHER" id="PTHR43096">
    <property type="entry name" value="DNAJ HOMOLOG 1, MITOCHONDRIAL-RELATED"/>
    <property type="match status" value="1"/>
</dbReference>
<dbReference type="Pfam" id="PF00226">
    <property type="entry name" value="DnaJ"/>
    <property type="match status" value="1"/>
</dbReference>
<dbReference type="Pfam" id="PF01556">
    <property type="entry name" value="DnaJ_C"/>
    <property type="match status" value="1"/>
</dbReference>
<dbReference type="Pfam" id="PF00684">
    <property type="entry name" value="DnaJ_CXXCXGXG"/>
    <property type="match status" value="1"/>
</dbReference>
<dbReference type="PRINTS" id="PR00625">
    <property type="entry name" value="JDOMAIN"/>
</dbReference>
<dbReference type="SMART" id="SM00271">
    <property type="entry name" value="DnaJ"/>
    <property type="match status" value="1"/>
</dbReference>
<dbReference type="SUPFAM" id="SSF46565">
    <property type="entry name" value="Chaperone J-domain"/>
    <property type="match status" value="1"/>
</dbReference>
<dbReference type="SUPFAM" id="SSF57938">
    <property type="entry name" value="DnaJ/Hsp40 cysteine-rich domain"/>
    <property type="match status" value="1"/>
</dbReference>
<dbReference type="SUPFAM" id="SSF49493">
    <property type="entry name" value="HSP40/DnaJ peptide-binding domain"/>
    <property type="match status" value="2"/>
</dbReference>
<dbReference type="PROSITE" id="PS00636">
    <property type="entry name" value="DNAJ_1"/>
    <property type="match status" value="1"/>
</dbReference>
<dbReference type="PROSITE" id="PS50076">
    <property type="entry name" value="DNAJ_2"/>
    <property type="match status" value="1"/>
</dbReference>
<dbReference type="PROSITE" id="PS51188">
    <property type="entry name" value="ZF_CR"/>
    <property type="match status" value="1"/>
</dbReference>
<evidence type="ECO:0000255" key="1">
    <source>
        <dbReference type="HAMAP-Rule" id="MF_01152"/>
    </source>
</evidence>
<proteinExistence type="inferred from homology"/>
<name>DNAJ_LACLM</name>
<gene>
    <name evidence="1" type="primary">dnaJ</name>
    <name type="ordered locus">llmg_2502</name>
</gene>